<organism>
    <name type="scientific">Rattus norvegicus</name>
    <name type="common">Rat</name>
    <dbReference type="NCBI Taxonomy" id="10116"/>
    <lineage>
        <taxon>Eukaryota</taxon>
        <taxon>Metazoa</taxon>
        <taxon>Chordata</taxon>
        <taxon>Craniata</taxon>
        <taxon>Vertebrata</taxon>
        <taxon>Euteleostomi</taxon>
        <taxon>Mammalia</taxon>
        <taxon>Eutheria</taxon>
        <taxon>Euarchontoglires</taxon>
        <taxon>Glires</taxon>
        <taxon>Rodentia</taxon>
        <taxon>Myomorpha</taxon>
        <taxon>Muroidea</taxon>
        <taxon>Muridae</taxon>
        <taxon>Murinae</taxon>
        <taxon>Rattus</taxon>
    </lineage>
</organism>
<keyword id="KW-0963">Cytoplasm</keyword>
<keyword id="KW-1015">Disulfide bond</keyword>
<keyword id="KW-0256">Endoplasmic reticulum</keyword>
<keyword id="KW-0325">Glycoprotein</keyword>
<keyword id="KW-0378">Hydrolase</keyword>
<keyword id="KW-0551">Lipid droplet</keyword>
<keyword id="KW-0492">Microsome</keyword>
<keyword id="KW-1185">Reference proteome</keyword>
<keyword id="KW-0719">Serine esterase</keyword>
<keyword id="KW-0732">Signal</keyword>
<proteinExistence type="evidence at protein level"/>
<dbReference type="EC" id="3.1.1.1"/>
<dbReference type="EMBL" id="X81825">
    <property type="protein sequence ID" value="CAA57419.1"/>
    <property type="molecule type" value="mRNA"/>
</dbReference>
<dbReference type="EMBL" id="U10697">
    <property type="protein sequence ID" value="AAA64638.1"/>
    <property type="molecule type" value="mRNA"/>
</dbReference>
<dbReference type="EMBL" id="BC128711">
    <property type="protein sequence ID" value="AAI28712.1"/>
    <property type="molecule type" value="mRNA"/>
</dbReference>
<dbReference type="PIR" id="S62788">
    <property type="entry name" value="S62788"/>
</dbReference>
<dbReference type="RefSeq" id="NP_001096829.2">
    <property type="nucleotide sequence ID" value="NM_001103359.2"/>
</dbReference>
<dbReference type="SMR" id="Q64573"/>
<dbReference type="FunCoup" id="Q64573">
    <property type="interactions" value="84"/>
</dbReference>
<dbReference type="ESTHER" id="ratno-kmcxe">
    <property type="family name" value="Carb_B_Chordata"/>
</dbReference>
<dbReference type="MEROPS" id="S09.965"/>
<dbReference type="GlyCosmos" id="Q64573">
    <property type="glycosylation" value="1 site, No reported glycans"/>
</dbReference>
<dbReference type="GlyGen" id="Q64573">
    <property type="glycosylation" value="1 site"/>
</dbReference>
<dbReference type="iPTMnet" id="Q64573"/>
<dbReference type="PhosphoSitePlus" id="Q64573"/>
<dbReference type="Ensembl" id="ENSRNOT00000024187.7">
    <property type="protein sequence ID" value="ENSRNOP00000024187.6"/>
    <property type="gene ID" value="ENSRNOG00000015438.6"/>
</dbReference>
<dbReference type="GeneID" id="100125372"/>
<dbReference type="KEGG" id="rno:100125372"/>
<dbReference type="AGR" id="RGD:1642419"/>
<dbReference type="CTD" id="234564"/>
<dbReference type="RGD" id="1642419">
    <property type="gene designation" value="Ces1f"/>
</dbReference>
<dbReference type="GeneTree" id="ENSGT00940000154623"/>
<dbReference type="InParanoid" id="Q64573"/>
<dbReference type="OrthoDB" id="3200163at2759"/>
<dbReference type="BRENDA" id="3.1.1.1">
    <property type="organism ID" value="5301"/>
</dbReference>
<dbReference type="PRO" id="PR:Q64573"/>
<dbReference type="Proteomes" id="UP000002494">
    <property type="component" value="Chromosome 19"/>
</dbReference>
<dbReference type="GO" id="GO:0005829">
    <property type="term" value="C:cytosol"/>
    <property type="evidence" value="ECO:0007669"/>
    <property type="project" value="UniProtKB-SubCell"/>
</dbReference>
<dbReference type="GO" id="GO:0005783">
    <property type="term" value="C:endoplasmic reticulum"/>
    <property type="evidence" value="ECO:0000318"/>
    <property type="project" value="GO_Central"/>
</dbReference>
<dbReference type="GO" id="GO:0043231">
    <property type="term" value="C:intracellular membrane-bounded organelle"/>
    <property type="evidence" value="ECO:0000314"/>
    <property type="project" value="UniProtKB"/>
</dbReference>
<dbReference type="GO" id="GO:0005811">
    <property type="term" value="C:lipid droplet"/>
    <property type="evidence" value="ECO:0000318"/>
    <property type="project" value="GO_Central"/>
</dbReference>
<dbReference type="GO" id="GO:0047376">
    <property type="term" value="F:all-trans-retinyl-palmitate hydrolase, all-trans-retinol forming activity"/>
    <property type="evidence" value="ECO:0007669"/>
    <property type="project" value="RHEA"/>
</dbReference>
<dbReference type="GO" id="GO:0106435">
    <property type="term" value="F:carboxylesterase activity"/>
    <property type="evidence" value="ECO:0007669"/>
    <property type="project" value="UniProtKB-EC"/>
</dbReference>
<dbReference type="GO" id="GO:0052689">
    <property type="term" value="F:carboxylic ester hydrolase activity"/>
    <property type="evidence" value="ECO:0000318"/>
    <property type="project" value="GO_Central"/>
</dbReference>
<dbReference type="GO" id="GO:0050253">
    <property type="term" value="F:retinyl-palmitate esterase activity"/>
    <property type="evidence" value="ECO:0000314"/>
    <property type="project" value="UniProtKB"/>
</dbReference>
<dbReference type="GO" id="GO:0016042">
    <property type="term" value="P:lipid catabolic process"/>
    <property type="evidence" value="ECO:0000318"/>
    <property type="project" value="GO_Central"/>
</dbReference>
<dbReference type="GO" id="GO:0036116">
    <property type="term" value="P:long-chain fatty-acyl-CoA catabolic process"/>
    <property type="evidence" value="ECO:0000314"/>
    <property type="project" value="RGD"/>
</dbReference>
<dbReference type="GO" id="GO:0001523">
    <property type="term" value="P:retinoid metabolic process"/>
    <property type="evidence" value="ECO:0000304"/>
    <property type="project" value="UniProtKB"/>
</dbReference>
<dbReference type="CDD" id="cd00312">
    <property type="entry name" value="Esterase_lipase"/>
    <property type="match status" value="1"/>
</dbReference>
<dbReference type="FunFam" id="3.40.50.1820:FF:000011">
    <property type="entry name" value="Carboxylic ester hydrolase"/>
    <property type="match status" value="1"/>
</dbReference>
<dbReference type="Gene3D" id="3.40.50.1820">
    <property type="entry name" value="alpha/beta hydrolase"/>
    <property type="match status" value="1"/>
</dbReference>
<dbReference type="InterPro" id="IPR029058">
    <property type="entry name" value="AB_hydrolase_fold"/>
</dbReference>
<dbReference type="InterPro" id="IPR002018">
    <property type="entry name" value="CarbesteraseB"/>
</dbReference>
<dbReference type="InterPro" id="IPR019826">
    <property type="entry name" value="Carboxylesterase_B_AS"/>
</dbReference>
<dbReference type="InterPro" id="IPR019819">
    <property type="entry name" value="Carboxylesterase_B_CS"/>
</dbReference>
<dbReference type="InterPro" id="IPR050309">
    <property type="entry name" value="Type-B_Carboxylest/Lipase"/>
</dbReference>
<dbReference type="PANTHER" id="PTHR11559">
    <property type="entry name" value="CARBOXYLESTERASE"/>
    <property type="match status" value="1"/>
</dbReference>
<dbReference type="Pfam" id="PF00135">
    <property type="entry name" value="COesterase"/>
    <property type="match status" value="1"/>
</dbReference>
<dbReference type="SUPFAM" id="SSF53474">
    <property type="entry name" value="alpha/beta-Hydrolases"/>
    <property type="match status" value="1"/>
</dbReference>
<dbReference type="PROSITE" id="PS00122">
    <property type="entry name" value="CARBOXYLESTERASE_B_1"/>
    <property type="match status" value="1"/>
</dbReference>
<dbReference type="PROSITE" id="PS00941">
    <property type="entry name" value="CARBOXYLESTERASE_B_2"/>
    <property type="match status" value="1"/>
</dbReference>
<dbReference type="PROSITE" id="PS00014">
    <property type="entry name" value="ER_TARGET"/>
    <property type="match status" value="1"/>
</dbReference>
<reference key="1">
    <citation type="journal article" date="1996" name="Biochem. J.">
        <title>Cloning and sequencing of rat liver carboxylesterase ES-4 (microsomal palmitoyl-CoA hydrolase).</title>
        <authorList>
            <person name="Robbi M."/>
            <person name="van Schaftingen E."/>
            <person name="Beaufay H."/>
        </authorList>
    </citation>
    <scope>NUCLEOTIDE SEQUENCE [MRNA]</scope>
    <source>
        <strain>Sprague-Dawley</strain>
        <tissue>Liver</tissue>
    </source>
</reference>
<reference key="2">
    <citation type="journal article" date="1994" name="J. Biol. Chem.">
        <title>Rat kidney carboxylesterase. Cloning, sequencing, cellular localization, and relationship to rat liver hydrolase.</title>
        <authorList>
            <person name="Yan B."/>
            <person name="Yang D."/>
            <person name="Brady M."/>
            <person name="Parkinson A."/>
        </authorList>
    </citation>
    <scope>NUCLEOTIDE SEQUENCE [MRNA]</scope>
    <scope>TISSUE SPECIFICITY</scope>
    <source>
        <strain>Sprague-Dawley</strain>
        <tissue>Kidney</tissue>
    </source>
</reference>
<reference key="3">
    <citation type="journal article" date="2004" name="Genome Res.">
        <title>The status, quality, and expansion of the NIH full-length cDNA project: the Mammalian Gene Collection (MGC).</title>
        <authorList>
            <consortium name="The MGC Project Team"/>
        </authorList>
    </citation>
    <scope>NUCLEOTIDE SEQUENCE [LARGE SCALE MRNA]</scope>
    <source>
        <tissue>Liver</tissue>
    </source>
</reference>
<reference key="4">
    <citation type="journal article" date="2002" name="Eur. J. Biochem.">
        <title>Identification of microsomal rat liver carboxylesterases and their activity with retinyl palmitate.</title>
        <authorList>
            <person name="Sanghani S.P."/>
            <person name="Davis W.I."/>
            <person name="Dumaual N.G."/>
            <person name="Mahrenholz A."/>
            <person name="Bosron W.F."/>
        </authorList>
    </citation>
    <scope>CATALYTIC ACTIVITY</scope>
    <scope>SUBCELLULAR LOCATION</scope>
    <scope>FUNCTION</scope>
    <scope>TISSUE SPECIFICITY</scope>
    <scope>BIOPHYSICOCHEMICAL PROPERTIES</scope>
</reference>
<comment type="function">
    <text evidence="3 8">Involved in the detoxification of xenobiotics and in the activation of ester and amide prodrugs. Hydrolyzes retinyl esters (PubMed:12230550). Hydrolyzes p-nitrophenyl butyrate (PNPB), triacylglycerol and monoacylglycerol. Shows higher activity against PNPB, a short-chain fatty acid ester, than against triolein, a long-chain fatty acid ester. Shows no detectable activity against diacylglycerol, cholesterol ester or phospholipids. May play a role in adipocyte lipolysis (By similarity).</text>
</comment>
<comment type="catalytic activity">
    <reaction evidence="6">
        <text>a carboxylic ester + H2O = an alcohol + a carboxylate + H(+)</text>
        <dbReference type="Rhea" id="RHEA:21164"/>
        <dbReference type="ChEBI" id="CHEBI:15377"/>
        <dbReference type="ChEBI" id="CHEBI:15378"/>
        <dbReference type="ChEBI" id="CHEBI:29067"/>
        <dbReference type="ChEBI" id="CHEBI:30879"/>
        <dbReference type="ChEBI" id="CHEBI:33308"/>
        <dbReference type="EC" id="3.1.1.1"/>
    </reaction>
</comment>
<comment type="catalytic activity">
    <reaction evidence="8">
        <text>all-trans-retinyl hexadecanoate + H2O = all-trans-retinol + hexadecanoate + H(+)</text>
        <dbReference type="Rhea" id="RHEA:13933"/>
        <dbReference type="ChEBI" id="CHEBI:7896"/>
        <dbReference type="ChEBI" id="CHEBI:15377"/>
        <dbReference type="ChEBI" id="CHEBI:15378"/>
        <dbReference type="ChEBI" id="CHEBI:17336"/>
        <dbReference type="ChEBI" id="CHEBI:17616"/>
    </reaction>
    <physiologicalReaction direction="left-to-right" evidence="11">
        <dbReference type="Rhea" id="RHEA:13934"/>
    </physiologicalReaction>
</comment>
<comment type="biophysicochemical properties">
    <kinetics>
        <KM evidence="8">1.4 uM for retinyl palmitate</KM>
        <text evidence="8">kcat is 0.45 min(-1) with retinyl palmitate as substrate.</text>
    </kinetics>
</comment>
<comment type="subcellular location">
    <subcellularLocation>
        <location evidence="3">Lipid droplet</location>
    </subcellularLocation>
    <subcellularLocation>
        <location evidence="3">Cytoplasm</location>
        <location evidence="3">Cytosol</location>
    </subcellularLocation>
    <subcellularLocation>
        <location evidence="3">Endoplasmic reticulum</location>
    </subcellularLocation>
    <subcellularLocation>
        <location evidence="8">Microsome</location>
    </subcellularLocation>
</comment>
<comment type="tissue specificity">
    <text evidence="8">Expressed in liver and kidney.</text>
</comment>
<comment type="similarity">
    <text evidence="10">Belongs to the type-B carboxylesterase/lipase family.</text>
</comment>
<protein>
    <recommendedName>
        <fullName evidence="10">Liver carboxylesterase 1F</fullName>
        <ecNumber>3.1.1.1</ecNumber>
    </recommendedName>
    <alternativeName>
        <fullName evidence="9">Carboxyesterase ES-4</fullName>
    </alternativeName>
    <alternativeName>
        <fullName>Kidney microsomal carboxylesterase</fullName>
    </alternativeName>
    <alternativeName>
        <fullName>Microsomal palmitoyl-CoA hydrolase</fullName>
    </alternativeName>
</protein>
<feature type="signal peptide" evidence="1">
    <location>
        <begin position="1"/>
        <end position="18"/>
    </location>
</feature>
<feature type="chain" id="PRO_0000008581" description="Liver carboxylesterase 1F">
    <location>
        <begin position="19"/>
        <end position="561"/>
    </location>
</feature>
<feature type="short sequence motif" description="Prevents secretion from ER" evidence="7">
    <location>
        <begin position="558"/>
        <end position="561"/>
    </location>
</feature>
<feature type="active site" description="Acyl-ester intermediate" evidence="6">
    <location>
        <position position="221"/>
    </location>
</feature>
<feature type="active site" description="Charge relay system" evidence="2">
    <location>
        <position position="353"/>
    </location>
</feature>
<feature type="active site" description="Charge relay system" evidence="2">
    <location>
        <position position="466"/>
    </location>
</feature>
<feature type="glycosylation site" description="N-linked (GlcNAc...) asparagine" evidence="5">
    <location>
        <position position="79"/>
    </location>
</feature>
<feature type="disulfide bond" evidence="4">
    <location>
        <begin position="87"/>
        <end position="116"/>
    </location>
</feature>
<feature type="disulfide bond" evidence="4">
    <location>
        <begin position="273"/>
        <end position="284"/>
    </location>
</feature>
<feature type="sequence conflict" description="In Ref. 1; CAA57419." evidence="10" ref="1">
    <original>F</original>
    <variation>I</variation>
    <location>
        <position position="7"/>
    </location>
</feature>
<feature type="sequence conflict" description="In Ref. 2; AAA64638." evidence="10" ref="2">
    <original>L</original>
    <variation>P</variation>
    <location>
        <position position="60"/>
    </location>
</feature>
<feature type="sequence conflict" description="In Ref. 2; AAA64638." evidence="10" ref="2">
    <original>G</original>
    <variation>A</variation>
    <location>
        <position position="213"/>
    </location>
</feature>
<feature type="sequence conflict" description="In Ref. 2; AAA64638." evidence="10" ref="2">
    <original>P</original>
    <variation>T</variation>
    <location>
        <position position="253"/>
    </location>
</feature>
<feature type="sequence conflict" description="In Ref. 2; AAA64638." evidence="10" ref="2">
    <original>DN</original>
    <variation>IT</variation>
    <location>
        <begin position="310"/>
        <end position="311"/>
    </location>
</feature>
<feature type="sequence conflict" description="In Ref. 2; AAA64638." evidence="10" ref="2">
    <original>T</original>
    <variation>N</variation>
    <location>
        <position position="342"/>
    </location>
</feature>
<feature type="sequence conflict" description="In Ref. 2; AAA64638." evidence="10" ref="2">
    <original>SI</original>
    <variation>FY</variation>
    <location>
        <begin position="425"/>
        <end position="426"/>
    </location>
</feature>
<feature type="sequence conflict" description="In Ref. 2; AAA64638." evidence="10" ref="2">
    <original>G</original>
    <variation>A</variation>
    <location>
        <position position="509"/>
    </location>
</feature>
<feature type="sequence conflict" description="In Ref. 2; AAA64638." evidence="10" ref="2">
    <original>Q</original>
    <variation>E</variation>
    <location>
        <position position="553"/>
    </location>
</feature>
<accession>Q64573</accession>
<accession>A2VCW1</accession>
<accession>Q62679</accession>
<name>EST1F_RAT</name>
<gene>
    <name evidence="12" type="primary">Ces1f</name>
</gene>
<evidence type="ECO:0000250" key="1"/>
<evidence type="ECO:0000250" key="2">
    <source>
        <dbReference type="UniProtKB" id="P23141"/>
    </source>
</evidence>
<evidence type="ECO:0000250" key="3">
    <source>
        <dbReference type="UniProtKB" id="Q91WU0"/>
    </source>
</evidence>
<evidence type="ECO:0000250" key="4">
    <source>
        <dbReference type="UniProtKB" id="Q99K10"/>
    </source>
</evidence>
<evidence type="ECO:0000255" key="5"/>
<evidence type="ECO:0000255" key="6">
    <source>
        <dbReference type="PROSITE-ProRule" id="PRU10039"/>
    </source>
</evidence>
<evidence type="ECO:0000255" key="7">
    <source>
        <dbReference type="PROSITE-ProRule" id="PRU10138"/>
    </source>
</evidence>
<evidence type="ECO:0000269" key="8">
    <source>
    </source>
</evidence>
<evidence type="ECO:0000303" key="9">
    <source>
    </source>
</evidence>
<evidence type="ECO:0000305" key="10"/>
<evidence type="ECO:0000305" key="11">
    <source>
    </source>
</evidence>
<evidence type="ECO:0000312" key="12">
    <source>
        <dbReference type="RGD" id="1642419"/>
    </source>
</evidence>
<sequence>MCLSFLFLVSLATCVVYGNPSSPPVVDTTKGKVLGKYVSLEGVTQSVAVFLGVPFAKPPLGSLRFAPPQPAEPWSFVKNTTTYPPMCSQDAAKGQRMNDLLTNRKEKIHLEFSEDCLYLNIYTPADFTKNSRLPVMVWIHGGGMTLGGASTYDGRVLSAYENVVVVAIQYRLGIWGFFSTGDEHSRGNWGHLDQVAALHWVQDNIANFGGDPGSVTIFGESAGGFSVSVLVLSPLTKNLFHRAISESGVVFLPGLLTKDVRPAAKQIADMAGCETTTSAIIVHCLRQKTEEELLEIMKKMNLIKLSSQRDNKESYHFLSTVVDNVVLPKDPKEILAEKNFNTVPYIVGINKQECGWLLPTMMGFVPADVELDKKMAITLLEKFASLYGIPEDIIPVAIEKYRKGSDDSIKIRDGILAFIGDVSFSIPSVMVSRDHRDAGAPTYMYEYQYYPSFSSPQRPKHVVGDHADDLYSVFGAPILRDGASEEEIKLSKMVMKFWANFARNGNPNGRGLPHWPQYDQKEEYLQIGATTQQSQRLKAEEVAFWTQLLAKRQPQPHHNEL</sequence>